<sequence length="428" mass="46430">MQILVYDNLDEKQKEEALKRPAISAKDEISKIVSSIIKEVQEKGDEALIEQALKFDKAEISKIKITQEEITQASKRLDKDLQEAILVAYENIKKFHEAQIPHEIALETTKGVKCEVLTRPIEKVGLYIPGGLAPLFSTVLMLAIPAKIAGCEKIVLASPAKINDAVLFCAKLCGVDEIYQMGGAGAIAALAYGTQSVLKVDKIFGPGNAFVTEAKRQVSSDINGAAIDMQAGPSEVLVIADDLANEKFVASDLLSQAEHGADSQVILVCLSQDFAKKASDEVQSQLELLPRKELASKSIANSRIIIAKDLNQALEISNLYAPEHLIIQTQNPRELLKGVKHAGSVFLGAYSPESMGDYASGTNHVLPTYGLTKTHSSLGLADFSKRMTVQELSKEGFLALGKSVEILAQNEHLDAHKNAVTFRLESLK</sequence>
<feature type="chain" id="PRO_0000135752" description="Histidinol dehydrogenase">
    <location>
        <begin position="1"/>
        <end position="428"/>
    </location>
</feature>
<feature type="active site" description="Proton acceptor" evidence="1">
    <location>
        <position position="323"/>
    </location>
</feature>
<feature type="active site" description="Proton acceptor" evidence="1">
    <location>
        <position position="324"/>
    </location>
</feature>
<feature type="binding site" evidence="1">
    <location>
        <position position="234"/>
    </location>
    <ligand>
        <name>substrate</name>
    </ligand>
</feature>
<feature type="binding site" evidence="1">
    <location>
        <position position="256"/>
    </location>
    <ligand>
        <name>substrate</name>
    </ligand>
</feature>
<feature type="binding site" evidence="1">
    <location>
        <position position="256"/>
    </location>
    <ligand>
        <name>Zn(2+)</name>
        <dbReference type="ChEBI" id="CHEBI:29105"/>
    </ligand>
</feature>
<feature type="binding site" evidence="1">
    <location>
        <position position="259"/>
    </location>
    <ligand>
        <name>substrate</name>
    </ligand>
</feature>
<feature type="binding site" evidence="1">
    <location>
        <position position="259"/>
    </location>
    <ligand>
        <name>Zn(2+)</name>
        <dbReference type="ChEBI" id="CHEBI:29105"/>
    </ligand>
</feature>
<feature type="binding site" evidence="1">
    <location>
        <position position="324"/>
    </location>
    <ligand>
        <name>substrate</name>
    </ligand>
</feature>
<feature type="binding site" evidence="1">
    <location>
        <position position="357"/>
    </location>
    <ligand>
        <name>substrate</name>
    </ligand>
</feature>
<feature type="binding site" evidence="1">
    <location>
        <position position="357"/>
    </location>
    <ligand>
        <name>Zn(2+)</name>
        <dbReference type="ChEBI" id="CHEBI:29105"/>
    </ligand>
</feature>
<feature type="binding site" evidence="1">
    <location>
        <position position="411"/>
    </location>
    <ligand>
        <name>substrate</name>
    </ligand>
</feature>
<feature type="binding site" evidence="1">
    <location>
        <position position="416"/>
    </location>
    <ligand>
        <name>substrate</name>
    </ligand>
</feature>
<feature type="binding site" evidence="1">
    <location>
        <position position="416"/>
    </location>
    <ligand>
        <name>Zn(2+)</name>
        <dbReference type="ChEBI" id="CHEBI:29105"/>
    </ligand>
</feature>
<keyword id="KW-0028">Amino-acid biosynthesis</keyword>
<keyword id="KW-0368">Histidine biosynthesis</keyword>
<keyword id="KW-0479">Metal-binding</keyword>
<keyword id="KW-0520">NAD</keyword>
<keyword id="KW-0560">Oxidoreductase</keyword>
<keyword id="KW-0862">Zinc</keyword>
<accession>Q5HSJ3</accession>
<organism>
    <name type="scientific">Campylobacter jejuni (strain RM1221)</name>
    <dbReference type="NCBI Taxonomy" id="195099"/>
    <lineage>
        <taxon>Bacteria</taxon>
        <taxon>Pseudomonadati</taxon>
        <taxon>Campylobacterota</taxon>
        <taxon>Epsilonproteobacteria</taxon>
        <taxon>Campylobacterales</taxon>
        <taxon>Campylobacteraceae</taxon>
        <taxon>Campylobacter</taxon>
    </lineage>
</organism>
<name>HISX_CAMJR</name>
<protein>
    <recommendedName>
        <fullName evidence="1">Histidinol dehydrogenase</fullName>
        <shortName evidence="1">HDH</shortName>
        <ecNumber evidence="1">1.1.1.23</ecNumber>
    </recommendedName>
</protein>
<reference key="1">
    <citation type="journal article" date="2005" name="PLoS Biol.">
        <title>Major structural differences and novel potential virulence mechanisms from the genomes of multiple Campylobacter species.</title>
        <authorList>
            <person name="Fouts D.E."/>
            <person name="Mongodin E.F."/>
            <person name="Mandrell R.E."/>
            <person name="Miller W.G."/>
            <person name="Rasko D.A."/>
            <person name="Ravel J."/>
            <person name="Brinkac L.M."/>
            <person name="DeBoy R.T."/>
            <person name="Parker C.T."/>
            <person name="Daugherty S.C."/>
            <person name="Dodson R.J."/>
            <person name="Durkin A.S."/>
            <person name="Madupu R."/>
            <person name="Sullivan S.A."/>
            <person name="Shetty J.U."/>
            <person name="Ayodeji M.A."/>
            <person name="Shvartsbeyn A."/>
            <person name="Schatz M.C."/>
            <person name="Badger J.H."/>
            <person name="Fraser C.M."/>
            <person name="Nelson K.E."/>
        </authorList>
    </citation>
    <scope>NUCLEOTIDE SEQUENCE [LARGE SCALE GENOMIC DNA]</scope>
    <source>
        <strain>RM1221</strain>
    </source>
</reference>
<dbReference type="EC" id="1.1.1.23" evidence="1"/>
<dbReference type="EMBL" id="CP000025">
    <property type="protein sequence ID" value="AAW36194.1"/>
    <property type="molecule type" value="Genomic_DNA"/>
</dbReference>
<dbReference type="RefSeq" id="WP_002867578.1">
    <property type="nucleotide sequence ID" value="NC_003912.7"/>
</dbReference>
<dbReference type="SMR" id="Q5HSJ3"/>
<dbReference type="KEGG" id="cjr:CJE1770"/>
<dbReference type="HOGENOM" id="CLU_006732_3_0_7"/>
<dbReference type="UniPathway" id="UPA00031">
    <property type="reaction ID" value="UER00014"/>
</dbReference>
<dbReference type="GO" id="GO:0005829">
    <property type="term" value="C:cytosol"/>
    <property type="evidence" value="ECO:0007669"/>
    <property type="project" value="TreeGrafter"/>
</dbReference>
<dbReference type="GO" id="GO:0004399">
    <property type="term" value="F:histidinol dehydrogenase activity"/>
    <property type="evidence" value="ECO:0007669"/>
    <property type="project" value="UniProtKB-UniRule"/>
</dbReference>
<dbReference type="GO" id="GO:0051287">
    <property type="term" value="F:NAD binding"/>
    <property type="evidence" value="ECO:0007669"/>
    <property type="project" value="InterPro"/>
</dbReference>
<dbReference type="GO" id="GO:0008270">
    <property type="term" value="F:zinc ion binding"/>
    <property type="evidence" value="ECO:0007669"/>
    <property type="project" value="UniProtKB-UniRule"/>
</dbReference>
<dbReference type="GO" id="GO:0000105">
    <property type="term" value="P:L-histidine biosynthetic process"/>
    <property type="evidence" value="ECO:0007669"/>
    <property type="project" value="UniProtKB-UniRule"/>
</dbReference>
<dbReference type="CDD" id="cd06572">
    <property type="entry name" value="Histidinol_dh"/>
    <property type="match status" value="1"/>
</dbReference>
<dbReference type="FunFam" id="1.20.5.1300:FF:000001">
    <property type="entry name" value="Histidine biosynthesis trifunctional protein"/>
    <property type="match status" value="1"/>
</dbReference>
<dbReference type="FunFam" id="3.40.50.1980:FF:000001">
    <property type="entry name" value="Histidinol dehydrogenase"/>
    <property type="match status" value="1"/>
</dbReference>
<dbReference type="FunFam" id="3.40.50.1980:FF:000002">
    <property type="entry name" value="Histidinol dehydrogenase, chloroplastic"/>
    <property type="match status" value="1"/>
</dbReference>
<dbReference type="Gene3D" id="1.20.5.1300">
    <property type="match status" value="1"/>
</dbReference>
<dbReference type="Gene3D" id="3.40.50.1980">
    <property type="entry name" value="Nitrogenase molybdenum iron protein domain"/>
    <property type="match status" value="2"/>
</dbReference>
<dbReference type="HAMAP" id="MF_01024">
    <property type="entry name" value="HisD"/>
    <property type="match status" value="1"/>
</dbReference>
<dbReference type="InterPro" id="IPR016161">
    <property type="entry name" value="Ald_DH/histidinol_DH"/>
</dbReference>
<dbReference type="InterPro" id="IPR001692">
    <property type="entry name" value="Histidinol_DH_CS"/>
</dbReference>
<dbReference type="InterPro" id="IPR022695">
    <property type="entry name" value="Histidinol_DH_monofunct"/>
</dbReference>
<dbReference type="InterPro" id="IPR012131">
    <property type="entry name" value="Hstdl_DH"/>
</dbReference>
<dbReference type="NCBIfam" id="TIGR00069">
    <property type="entry name" value="hisD"/>
    <property type="match status" value="1"/>
</dbReference>
<dbReference type="PANTHER" id="PTHR21256:SF2">
    <property type="entry name" value="HISTIDINE BIOSYNTHESIS TRIFUNCTIONAL PROTEIN"/>
    <property type="match status" value="1"/>
</dbReference>
<dbReference type="PANTHER" id="PTHR21256">
    <property type="entry name" value="HISTIDINOL DEHYDROGENASE HDH"/>
    <property type="match status" value="1"/>
</dbReference>
<dbReference type="Pfam" id="PF00815">
    <property type="entry name" value="Histidinol_dh"/>
    <property type="match status" value="1"/>
</dbReference>
<dbReference type="PIRSF" id="PIRSF000099">
    <property type="entry name" value="Histidinol_dh"/>
    <property type="match status" value="1"/>
</dbReference>
<dbReference type="PRINTS" id="PR00083">
    <property type="entry name" value="HOLDHDRGNASE"/>
</dbReference>
<dbReference type="SUPFAM" id="SSF53720">
    <property type="entry name" value="ALDH-like"/>
    <property type="match status" value="1"/>
</dbReference>
<dbReference type="PROSITE" id="PS00611">
    <property type="entry name" value="HISOL_DEHYDROGENASE"/>
    <property type="match status" value="1"/>
</dbReference>
<comment type="function">
    <text evidence="1">Catalyzes the sequential NAD-dependent oxidations of L-histidinol to L-histidinaldehyde and then to L-histidine.</text>
</comment>
<comment type="catalytic activity">
    <reaction evidence="1">
        <text>L-histidinol + 2 NAD(+) + H2O = L-histidine + 2 NADH + 3 H(+)</text>
        <dbReference type="Rhea" id="RHEA:20641"/>
        <dbReference type="ChEBI" id="CHEBI:15377"/>
        <dbReference type="ChEBI" id="CHEBI:15378"/>
        <dbReference type="ChEBI" id="CHEBI:57540"/>
        <dbReference type="ChEBI" id="CHEBI:57595"/>
        <dbReference type="ChEBI" id="CHEBI:57699"/>
        <dbReference type="ChEBI" id="CHEBI:57945"/>
        <dbReference type="EC" id="1.1.1.23"/>
    </reaction>
</comment>
<comment type="cofactor">
    <cofactor evidence="1">
        <name>Zn(2+)</name>
        <dbReference type="ChEBI" id="CHEBI:29105"/>
    </cofactor>
    <text evidence="1">Binds 1 zinc ion per subunit.</text>
</comment>
<comment type="pathway">
    <text evidence="1">Amino-acid biosynthesis; L-histidine biosynthesis; L-histidine from 5-phospho-alpha-D-ribose 1-diphosphate: step 9/9.</text>
</comment>
<comment type="similarity">
    <text evidence="1">Belongs to the histidinol dehydrogenase family.</text>
</comment>
<gene>
    <name evidence="1" type="primary">hisD</name>
    <name type="ordered locus">CJE1770</name>
</gene>
<proteinExistence type="inferred from homology"/>
<evidence type="ECO:0000255" key="1">
    <source>
        <dbReference type="HAMAP-Rule" id="MF_01024"/>
    </source>
</evidence>